<comment type="function">
    <text evidence="1">Component of the RavA-ViaA chaperone complex, which may act on the membrane to optimize the function of some of the respiratory chains. ViaA stimulates the ATPase activity of RavA.</text>
</comment>
<comment type="subunit">
    <text evidence="1">Homodimer. Interacts with RavA.</text>
</comment>
<comment type="subcellular location">
    <subcellularLocation>
        <location evidence="1">Cytoplasm</location>
    </subcellularLocation>
</comment>
<comment type="similarity">
    <text evidence="1">Belongs to the ViaA family.</text>
</comment>
<comment type="sequence caution" evidence="2">
    <conflict type="erroneous initiation">
        <sequence resource="EMBL-CDS" id="AAG58948"/>
    </conflict>
</comment>
<proteinExistence type="inferred from homology"/>
<evidence type="ECO:0000255" key="1">
    <source>
        <dbReference type="HAMAP-Rule" id="MF_01626"/>
    </source>
</evidence>
<evidence type="ECO:0000305" key="2"/>
<keyword id="KW-0143">Chaperone</keyword>
<keyword id="KW-0963">Cytoplasm</keyword>
<keyword id="KW-1185">Reference proteome</keyword>
<protein>
    <recommendedName>
        <fullName evidence="1">Regulatory protein ViaA</fullName>
    </recommendedName>
    <alternativeName>
        <fullName evidence="1">VWA interacting with AAA+ ATPase</fullName>
    </alternativeName>
</protein>
<sequence>MLTLDTLNVMLAVSEEGLIEEMIIALLASPQLAVFFEKFPRLKAAITDDVPRWREALRSRLKDARVPPELTEEVMCYQQSQLLSTPQFIVQLPQILDLLHRLNSPWAEQARQLVDANSTITSALHTLFLQRWRLSLIVQATTLNQQLLEEEREQLLSEVQERMTLSGQLEPILADNNTAAGRLWDMSAGQLKRGDYQLIVKYGEFLNEQPELKRLAEQLGRSREAKSIPRNDAQMETFRTMVREPATVPEQVDGLQQSDDILRLLPPELATLGITELEYEFYRRLVEKQLLTYRLHGESWREKVIERPVVHKDYDEQPRGPFIVCVDTSGSMGGFNEQCAKAFCLALMRIALAENRRCYIMLFSTEIVRYELSGPQGIEQAIRFLSQQFRGGTDLASCFRAIMERLQSREWFDADAVVISDFIAQRLPDDVTSKVKELQRVHQHRFHAVAMSAHGKPGIMRIFDHIWRFDTGMRSRLLRRWRR</sequence>
<gene>
    <name evidence="1" type="primary">viaA</name>
    <name type="ordered locus">Z5246</name>
    <name type="ordered locus">ECs4687</name>
</gene>
<name>VIAA_ECO57</name>
<organism>
    <name type="scientific">Escherichia coli O157:H7</name>
    <dbReference type="NCBI Taxonomy" id="83334"/>
    <lineage>
        <taxon>Bacteria</taxon>
        <taxon>Pseudomonadati</taxon>
        <taxon>Pseudomonadota</taxon>
        <taxon>Gammaproteobacteria</taxon>
        <taxon>Enterobacterales</taxon>
        <taxon>Enterobacteriaceae</taxon>
        <taxon>Escherichia</taxon>
    </lineage>
</organism>
<feature type="chain" id="PRO_0000196584" description="Regulatory protein ViaA">
    <location>
        <begin position="1"/>
        <end position="483"/>
    </location>
</feature>
<reference key="1">
    <citation type="journal article" date="2001" name="Nature">
        <title>Genome sequence of enterohaemorrhagic Escherichia coli O157:H7.</title>
        <authorList>
            <person name="Perna N.T."/>
            <person name="Plunkett G. III"/>
            <person name="Burland V."/>
            <person name="Mau B."/>
            <person name="Glasner J.D."/>
            <person name="Rose D.J."/>
            <person name="Mayhew G.F."/>
            <person name="Evans P.S."/>
            <person name="Gregor J."/>
            <person name="Kirkpatrick H.A."/>
            <person name="Posfai G."/>
            <person name="Hackett J."/>
            <person name="Klink S."/>
            <person name="Boutin A."/>
            <person name="Shao Y."/>
            <person name="Miller L."/>
            <person name="Grotbeck E.J."/>
            <person name="Davis N.W."/>
            <person name="Lim A."/>
            <person name="Dimalanta E.T."/>
            <person name="Potamousis K."/>
            <person name="Apodaca J."/>
            <person name="Anantharaman T.S."/>
            <person name="Lin J."/>
            <person name="Yen G."/>
            <person name="Schwartz D.C."/>
            <person name="Welch R.A."/>
            <person name="Blattner F.R."/>
        </authorList>
    </citation>
    <scope>NUCLEOTIDE SEQUENCE [LARGE SCALE GENOMIC DNA]</scope>
    <source>
        <strain>O157:H7 / EDL933 / ATCC 700927 / EHEC</strain>
    </source>
</reference>
<reference key="2">
    <citation type="journal article" date="2001" name="DNA Res.">
        <title>Complete genome sequence of enterohemorrhagic Escherichia coli O157:H7 and genomic comparison with a laboratory strain K-12.</title>
        <authorList>
            <person name="Hayashi T."/>
            <person name="Makino K."/>
            <person name="Ohnishi M."/>
            <person name="Kurokawa K."/>
            <person name="Ishii K."/>
            <person name="Yokoyama K."/>
            <person name="Han C.-G."/>
            <person name="Ohtsubo E."/>
            <person name="Nakayama K."/>
            <person name="Murata T."/>
            <person name="Tanaka M."/>
            <person name="Tobe T."/>
            <person name="Iida T."/>
            <person name="Takami H."/>
            <person name="Honda T."/>
            <person name="Sasakawa C."/>
            <person name="Ogasawara N."/>
            <person name="Yasunaga T."/>
            <person name="Kuhara S."/>
            <person name="Shiba T."/>
            <person name="Hattori M."/>
            <person name="Shinagawa H."/>
        </authorList>
    </citation>
    <scope>NUCLEOTIDE SEQUENCE [LARGE SCALE GENOMIC DNA]</scope>
    <source>
        <strain>O157:H7 / Sakai / RIMD 0509952 / EHEC</strain>
    </source>
</reference>
<accession>P0ADN1</accession>
<accession>P03818</accession>
<accession>P31472</accession>
<accession>Q6BF11</accession>
<accession>Q8XAX6</accession>
<dbReference type="EMBL" id="AE005174">
    <property type="protein sequence ID" value="AAG58948.1"/>
    <property type="status" value="ALT_INIT"/>
    <property type="molecule type" value="Genomic_DNA"/>
</dbReference>
<dbReference type="EMBL" id="BA000007">
    <property type="protein sequence ID" value="BAB38110.1"/>
    <property type="molecule type" value="Genomic_DNA"/>
</dbReference>
<dbReference type="RefSeq" id="NP_312714.1">
    <property type="nucleotide sequence ID" value="NC_002695.1"/>
</dbReference>
<dbReference type="RefSeq" id="WP_000956642.1">
    <property type="nucleotide sequence ID" value="NZ_VOAI01000011.1"/>
</dbReference>
<dbReference type="SMR" id="P0ADN1"/>
<dbReference type="STRING" id="155864.Z5246"/>
<dbReference type="GeneID" id="915332"/>
<dbReference type="GeneID" id="93778222"/>
<dbReference type="KEGG" id="ece:Z5246"/>
<dbReference type="KEGG" id="ecs:ECs_4687"/>
<dbReference type="PATRIC" id="fig|386585.9.peg.4893"/>
<dbReference type="eggNOG" id="COG2425">
    <property type="taxonomic scope" value="Bacteria"/>
</dbReference>
<dbReference type="HOGENOM" id="CLU_022130_0_0_6"/>
<dbReference type="OMA" id="CDQWYQS"/>
<dbReference type="Proteomes" id="UP000000558">
    <property type="component" value="Chromosome"/>
</dbReference>
<dbReference type="Proteomes" id="UP000002519">
    <property type="component" value="Chromosome"/>
</dbReference>
<dbReference type="GO" id="GO:0005829">
    <property type="term" value="C:cytosol"/>
    <property type="evidence" value="ECO:0007669"/>
    <property type="project" value="TreeGrafter"/>
</dbReference>
<dbReference type="CDD" id="cd01462">
    <property type="entry name" value="VWA_YIEM_type"/>
    <property type="match status" value="1"/>
</dbReference>
<dbReference type="Gene3D" id="3.40.50.410">
    <property type="entry name" value="von Willebrand factor, type A domain"/>
    <property type="match status" value="1"/>
</dbReference>
<dbReference type="HAMAP" id="MF_01626">
    <property type="entry name" value="ViaA"/>
    <property type="match status" value="1"/>
</dbReference>
<dbReference type="InterPro" id="IPR008912">
    <property type="entry name" value="Uncharacterised_CoxE"/>
</dbReference>
<dbReference type="InterPro" id="IPR023481">
    <property type="entry name" value="Uncharacterised_ViaA"/>
</dbReference>
<dbReference type="InterPro" id="IPR002035">
    <property type="entry name" value="VWF_A"/>
</dbReference>
<dbReference type="InterPro" id="IPR036465">
    <property type="entry name" value="vWFA_dom_sf"/>
</dbReference>
<dbReference type="NCBIfam" id="NF008230">
    <property type="entry name" value="PRK10997.1"/>
    <property type="match status" value="1"/>
</dbReference>
<dbReference type="PANTHER" id="PTHR36846">
    <property type="entry name" value="PROTEIN VIAA"/>
    <property type="match status" value="1"/>
</dbReference>
<dbReference type="PANTHER" id="PTHR36846:SF1">
    <property type="entry name" value="PROTEIN VIAA"/>
    <property type="match status" value="1"/>
</dbReference>
<dbReference type="Pfam" id="PF05762">
    <property type="entry name" value="VWA_CoxE"/>
    <property type="match status" value="1"/>
</dbReference>
<dbReference type="SMART" id="SM00327">
    <property type="entry name" value="VWA"/>
    <property type="match status" value="1"/>
</dbReference>
<dbReference type="SUPFAM" id="SSF53300">
    <property type="entry name" value="vWA-like"/>
    <property type="match status" value="1"/>
</dbReference>